<name>LUXS_SHESW</name>
<protein>
    <recommendedName>
        <fullName evidence="1">S-ribosylhomocysteine lyase</fullName>
        <ecNumber evidence="1">4.4.1.21</ecNumber>
    </recommendedName>
    <alternativeName>
        <fullName evidence="1">AI-2 synthesis protein</fullName>
    </alternativeName>
    <alternativeName>
        <fullName evidence="1">Autoinducer-2 production protein LuxS</fullName>
    </alternativeName>
</protein>
<comment type="function">
    <text evidence="1">Involved in the synthesis of autoinducer 2 (AI-2) which is secreted by bacteria and is used to communicate both the cell density and the metabolic potential of the environment. The regulation of gene expression in response to changes in cell density is called quorum sensing. Catalyzes the transformation of S-ribosylhomocysteine (RHC) to homocysteine (HC) and 4,5-dihydroxy-2,3-pentadione (DPD).</text>
</comment>
<comment type="catalytic activity">
    <reaction evidence="1">
        <text>S-(5-deoxy-D-ribos-5-yl)-L-homocysteine = (S)-4,5-dihydroxypentane-2,3-dione + L-homocysteine</text>
        <dbReference type="Rhea" id="RHEA:17753"/>
        <dbReference type="ChEBI" id="CHEBI:29484"/>
        <dbReference type="ChEBI" id="CHEBI:58195"/>
        <dbReference type="ChEBI" id="CHEBI:58199"/>
        <dbReference type="EC" id="4.4.1.21"/>
    </reaction>
</comment>
<comment type="cofactor">
    <cofactor evidence="1">
        <name>Fe cation</name>
        <dbReference type="ChEBI" id="CHEBI:24875"/>
    </cofactor>
    <text evidence="1">Binds 1 Fe cation per subunit.</text>
</comment>
<comment type="subunit">
    <text evidence="1">Homodimer.</text>
</comment>
<comment type="similarity">
    <text evidence="1">Belongs to the LuxS family.</text>
</comment>
<accession>A1RN08</accession>
<keyword id="KW-0071">Autoinducer synthesis</keyword>
<keyword id="KW-0408">Iron</keyword>
<keyword id="KW-0456">Lyase</keyword>
<keyword id="KW-0479">Metal-binding</keyword>
<keyword id="KW-0673">Quorum sensing</keyword>
<feature type="chain" id="PRO_0000298029" description="S-ribosylhomocysteine lyase">
    <location>
        <begin position="1"/>
        <end position="169"/>
    </location>
</feature>
<feature type="binding site" evidence="1">
    <location>
        <position position="54"/>
    </location>
    <ligand>
        <name>Fe cation</name>
        <dbReference type="ChEBI" id="CHEBI:24875"/>
    </ligand>
</feature>
<feature type="binding site" evidence="1">
    <location>
        <position position="58"/>
    </location>
    <ligand>
        <name>Fe cation</name>
        <dbReference type="ChEBI" id="CHEBI:24875"/>
    </ligand>
</feature>
<feature type="binding site" evidence="1">
    <location>
        <position position="128"/>
    </location>
    <ligand>
        <name>Fe cation</name>
        <dbReference type="ChEBI" id="CHEBI:24875"/>
    </ligand>
</feature>
<gene>
    <name evidence="1" type="primary">luxS</name>
    <name type="ordered locus">Sputw3181_3238</name>
</gene>
<proteinExistence type="inferred from homology"/>
<organism>
    <name type="scientific">Shewanella sp. (strain W3-18-1)</name>
    <dbReference type="NCBI Taxonomy" id="351745"/>
    <lineage>
        <taxon>Bacteria</taxon>
        <taxon>Pseudomonadati</taxon>
        <taxon>Pseudomonadota</taxon>
        <taxon>Gammaproteobacteria</taxon>
        <taxon>Alteromonadales</taxon>
        <taxon>Shewanellaceae</taxon>
        <taxon>Shewanella</taxon>
    </lineage>
</organism>
<evidence type="ECO:0000255" key="1">
    <source>
        <dbReference type="HAMAP-Rule" id="MF_00091"/>
    </source>
</evidence>
<reference key="1">
    <citation type="submission" date="2006-12" db="EMBL/GenBank/DDBJ databases">
        <title>Complete sequence of Shewanella sp. W3-18-1.</title>
        <authorList>
            <consortium name="US DOE Joint Genome Institute"/>
            <person name="Copeland A."/>
            <person name="Lucas S."/>
            <person name="Lapidus A."/>
            <person name="Barry K."/>
            <person name="Detter J.C."/>
            <person name="Glavina del Rio T."/>
            <person name="Hammon N."/>
            <person name="Israni S."/>
            <person name="Dalin E."/>
            <person name="Tice H."/>
            <person name="Pitluck S."/>
            <person name="Chain P."/>
            <person name="Malfatti S."/>
            <person name="Shin M."/>
            <person name="Vergez L."/>
            <person name="Schmutz J."/>
            <person name="Larimer F."/>
            <person name="Land M."/>
            <person name="Hauser L."/>
            <person name="Kyrpides N."/>
            <person name="Lykidis A."/>
            <person name="Tiedje J."/>
            <person name="Richardson P."/>
        </authorList>
    </citation>
    <scope>NUCLEOTIDE SEQUENCE [LARGE SCALE GENOMIC DNA]</scope>
    <source>
        <strain>W3-18-1</strain>
    </source>
</reference>
<sequence>MPLLDSFTVDHTRMNAPAVRVAKHMSTPKGDAITVFDLRFCTPNKEILSERGIHTLEHLFAGFMRDHLNSSNVEIIDISPMGCRTGFYMSLIGEPTEHQVAVAWLAAMEDVLKVVEQSEIPELNEYQCGTYEMHSLEQAQEIARNIIAAGVSVNRNDDLKLSDEILGKL</sequence>
<dbReference type="EC" id="4.4.1.21" evidence="1"/>
<dbReference type="EMBL" id="CP000503">
    <property type="protein sequence ID" value="ABM26053.1"/>
    <property type="molecule type" value="Genomic_DNA"/>
</dbReference>
<dbReference type="RefSeq" id="WP_011790501.1">
    <property type="nucleotide sequence ID" value="NC_008750.1"/>
</dbReference>
<dbReference type="SMR" id="A1RN08"/>
<dbReference type="GeneID" id="67442446"/>
<dbReference type="KEGG" id="shw:Sputw3181_3238"/>
<dbReference type="HOGENOM" id="CLU_107531_2_0_6"/>
<dbReference type="Proteomes" id="UP000002597">
    <property type="component" value="Chromosome"/>
</dbReference>
<dbReference type="GO" id="GO:0005506">
    <property type="term" value="F:iron ion binding"/>
    <property type="evidence" value="ECO:0007669"/>
    <property type="project" value="InterPro"/>
</dbReference>
<dbReference type="GO" id="GO:0043768">
    <property type="term" value="F:S-ribosylhomocysteine lyase activity"/>
    <property type="evidence" value="ECO:0007669"/>
    <property type="project" value="UniProtKB-UniRule"/>
</dbReference>
<dbReference type="GO" id="GO:0009372">
    <property type="term" value="P:quorum sensing"/>
    <property type="evidence" value="ECO:0007669"/>
    <property type="project" value="UniProtKB-UniRule"/>
</dbReference>
<dbReference type="FunFam" id="3.30.1360.80:FF:000001">
    <property type="entry name" value="S-ribosylhomocysteine lyase"/>
    <property type="match status" value="1"/>
</dbReference>
<dbReference type="Gene3D" id="3.30.1360.80">
    <property type="entry name" value="S-ribosylhomocysteinase (LuxS)"/>
    <property type="match status" value="1"/>
</dbReference>
<dbReference type="HAMAP" id="MF_00091">
    <property type="entry name" value="LuxS"/>
    <property type="match status" value="1"/>
</dbReference>
<dbReference type="InterPro" id="IPR037005">
    <property type="entry name" value="LuxS_sf"/>
</dbReference>
<dbReference type="InterPro" id="IPR011249">
    <property type="entry name" value="Metalloenz_LuxS/M16"/>
</dbReference>
<dbReference type="InterPro" id="IPR003815">
    <property type="entry name" value="S-ribosylhomocysteinase"/>
</dbReference>
<dbReference type="NCBIfam" id="NF002602">
    <property type="entry name" value="PRK02260.1-2"/>
    <property type="match status" value="1"/>
</dbReference>
<dbReference type="PANTHER" id="PTHR35799">
    <property type="entry name" value="S-RIBOSYLHOMOCYSTEINE LYASE"/>
    <property type="match status" value="1"/>
</dbReference>
<dbReference type="PANTHER" id="PTHR35799:SF1">
    <property type="entry name" value="S-RIBOSYLHOMOCYSTEINE LYASE"/>
    <property type="match status" value="1"/>
</dbReference>
<dbReference type="Pfam" id="PF02664">
    <property type="entry name" value="LuxS"/>
    <property type="match status" value="1"/>
</dbReference>
<dbReference type="PIRSF" id="PIRSF006160">
    <property type="entry name" value="AI2"/>
    <property type="match status" value="1"/>
</dbReference>
<dbReference type="PRINTS" id="PR01487">
    <property type="entry name" value="LUXSPROTEIN"/>
</dbReference>
<dbReference type="SUPFAM" id="SSF63411">
    <property type="entry name" value="LuxS/MPP-like metallohydrolase"/>
    <property type="match status" value="1"/>
</dbReference>